<accession>A8XY95</accession>
<keyword id="KW-0028">Amino-acid biosynthesis</keyword>
<keyword id="KW-0846">Cobalamin</keyword>
<keyword id="KW-0170">Cobalt</keyword>
<keyword id="KW-0479">Metal-binding</keyword>
<keyword id="KW-0486">Methionine biosynthesis</keyword>
<keyword id="KW-0489">Methyltransferase</keyword>
<keyword id="KW-1185">Reference proteome</keyword>
<keyword id="KW-0677">Repeat</keyword>
<keyword id="KW-0949">S-adenosyl-L-methionine</keyword>
<keyword id="KW-0808">Transferase</keyword>
<keyword id="KW-0862">Zinc</keyword>
<dbReference type="EC" id="2.1.1.13"/>
<dbReference type="EMBL" id="HE600991">
    <property type="protein sequence ID" value="CAP37612.2"/>
    <property type="molecule type" value="Genomic_DNA"/>
</dbReference>
<dbReference type="SMR" id="A8XY95"/>
<dbReference type="FunCoup" id="A8XY95">
    <property type="interactions" value="1042"/>
</dbReference>
<dbReference type="STRING" id="6238.A8XY95"/>
<dbReference type="WormBase" id="CBG20636">
    <property type="protein sequence ID" value="CBP04996"/>
    <property type="gene ID" value="WBGene00039583"/>
    <property type="gene designation" value="Cbr-metr-1"/>
</dbReference>
<dbReference type="eggNOG" id="KOG1579">
    <property type="taxonomic scope" value="Eukaryota"/>
</dbReference>
<dbReference type="HOGENOM" id="CLU_004914_2_0_1"/>
<dbReference type="InParanoid" id="A8XY95"/>
<dbReference type="OMA" id="ADCIAMS"/>
<dbReference type="UniPathway" id="UPA00051">
    <property type="reaction ID" value="UER00081"/>
</dbReference>
<dbReference type="Proteomes" id="UP000008549">
    <property type="component" value="Unassembled WGS sequence"/>
</dbReference>
<dbReference type="GO" id="GO:0005829">
    <property type="term" value="C:cytosol"/>
    <property type="evidence" value="ECO:0000318"/>
    <property type="project" value="GO_Central"/>
</dbReference>
<dbReference type="GO" id="GO:0031419">
    <property type="term" value="F:cobalamin binding"/>
    <property type="evidence" value="ECO:0007669"/>
    <property type="project" value="UniProtKB-KW"/>
</dbReference>
<dbReference type="GO" id="GO:0008705">
    <property type="term" value="F:methionine synthase activity"/>
    <property type="evidence" value="ECO:0000318"/>
    <property type="project" value="GO_Central"/>
</dbReference>
<dbReference type="GO" id="GO:0008270">
    <property type="term" value="F:zinc ion binding"/>
    <property type="evidence" value="ECO:0007669"/>
    <property type="project" value="InterPro"/>
</dbReference>
<dbReference type="GO" id="GO:0050667">
    <property type="term" value="P:homocysteine metabolic process"/>
    <property type="evidence" value="ECO:0000318"/>
    <property type="project" value="GO_Central"/>
</dbReference>
<dbReference type="GO" id="GO:0009086">
    <property type="term" value="P:methionine biosynthetic process"/>
    <property type="evidence" value="ECO:0000318"/>
    <property type="project" value="GO_Central"/>
</dbReference>
<dbReference type="GO" id="GO:0032259">
    <property type="term" value="P:methylation"/>
    <property type="evidence" value="ECO:0007669"/>
    <property type="project" value="UniProtKB-KW"/>
</dbReference>
<dbReference type="GO" id="GO:0046653">
    <property type="term" value="P:tetrahydrofolate metabolic process"/>
    <property type="evidence" value="ECO:0000318"/>
    <property type="project" value="GO_Central"/>
</dbReference>
<dbReference type="CDD" id="cd02069">
    <property type="entry name" value="methionine_synthase_B12_BD"/>
    <property type="match status" value="1"/>
</dbReference>
<dbReference type="CDD" id="cd00740">
    <property type="entry name" value="MeTr"/>
    <property type="match status" value="1"/>
</dbReference>
<dbReference type="FunFam" id="1.10.1240.10:FF:000001">
    <property type="entry name" value="Methionine synthase"/>
    <property type="match status" value="1"/>
</dbReference>
<dbReference type="FunFam" id="3.20.20.20:FF:000002">
    <property type="entry name" value="Methionine synthase"/>
    <property type="match status" value="1"/>
</dbReference>
<dbReference type="FunFam" id="3.20.20.330:FF:000001">
    <property type="entry name" value="Methionine synthase"/>
    <property type="match status" value="1"/>
</dbReference>
<dbReference type="FunFam" id="3.40.50.280:FF:000001">
    <property type="entry name" value="Methionine synthase"/>
    <property type="match status" value="1"/>
</dbReference>
<dbReference type="Gene3D" id="3.40.50.280">
    <property type="entry name" value="Cobalamin-binding domain"/>
    <property type="match status" value="1"/>
</dbReference>
<dbReference type="Gene3D" id="1.10.288.10">
    <property type="entry name" value="Cobalamin-dependent Methionine Synthase, domain 2"/>
    <property type="match status" value="1"/>
</dbReference>
<dbReference type="Gene3D" id="3.20.20.20">
    <property type="entry name" value="Dihydropteroate synthase-like"/>
    <property type="match status" value="1"/>
</dbReference>
<dbReference type="Gene3D" id="3.20.20.330">
    <property type="entry name" value="Homocysteine-binding-like domain"/>
    <property type="match status" value="1"/>
</dbReference>
<dbReference type="Gene3D" id="1.10.1240.10">
    <property type="entry name" value="Methionine synthase domain"/>
    <property type="match status" value="1"/>
</dbReference>
<dbReference type="Gene3D" id="3.10.196.10">
    <property type="entry name" value="Vitamin B12-dependent methionine synthase, activation domain"/>
    <property type="match status" value="1"/>
</dbReference>
<dbReference type="InterPro" id="IPR003759">
    <property type="entry name" value="Cbl-bd_cap"/>
</dbReference>
<dbReference type="InterPro" id="IPR006158">
    <property type="entry name" value="Cobalamin-bd"/>
</dbReference>
<dbReference type="InterPro" id="IPR036724">
    <property type="entry name" value="Cobalamin-bd_sf"/>
</dbReference>
<dbReference type="InterPro" id="IPR011005">
    <property type="entry name" value="Dihydropteroate_synth-like_sf"/>
</dbReference>
<dbReference type="InterPro" id="IPR003726">
    <property type="entry name" value="HCY_dom"/>
</dbReference>
<dbReference type="InterPro" id="IPR036589">
    <property type="entry name" value="HCY_dom_sf"/>
</dbReference>
<dbReference type="InterPro" id="IPR050554">
    <property type="entry name" value="Met_Synthase/Corrinoid"/>
</dbReference>
<dbReference type="InterPro" id="IPR033706">
    <property type="entry name" value="Met_synthase_B12-bd"/>
</dbReference>
<dbReference type="InterPro" id="IPR011822">
    <property type="entry name" value="MetH"/>
</dbReference>
<dbReference type="InterPro" id="IPR036594">
    <property type="entry name" value="Meth_synthase_dom"/>
</dbReference>
<dbReference type="InterPro" id="IPR000489">
    <property type="entry name" value="Pterin-binding_dom"/>
</dbReference>
<dbReference type="InterPro" id="IPR004223">
    <property type="entry name" value="VitB12-dep_Met_synth_activ_dom"/>
</dbReference>
<dbReference type="InterPro" id="IPR037010">
    <property type="entry name" value="VitB12-dep_Met_synth_activ_sf"/>
</dbReference>
<dbReference type="NCBIfam" id="TIGR02082">
    <property type="entry name" value="metH"/>
    <property type="match status" value="1"/>
</dbReference>
<dbReference type="NCBIfam" id="NF007024">
    <property type="entry name" value="PRK09490.1"/>
    <property type="match status" value="1"/>
</dbReference>
<dbReference type="PANTHER" id="PTHR45833">
    <property type="entry name" value="METHIONINE SYNTHASE"/>
    <property type="match status" value="1"/>
</dbReference>
<dbReference type="PANTHER" id="PTHR45833:SF1">
    <property type="entry name" value="METHIONINE SYNTHASE"/>
    <property type="match status" value="1"/>
</dbReference>
<dbReference type="Pfam" id="PF02310">
    <property type="entry name" value="B12-binding"/>
    <property type="match status" value="1"/>
</dbReference>
<dbReference type="Pfam" id="PF02607">
    <property type="entry name" value="B12-binding_2"/>
    <property type="match status" value="1"/>
</dbReference>
<dbReference type="Pfam" id="PF02965">
    <property type="entry name" value="Met_synt_B12"/>
    <property type="match status" value="1"/>
</dbReference>
<dbReference type="Pfam" id="PF00809">
    <property type="entry name" value="Pterin_bind"/>
    <property type="match status" value="1"/>
</dbReference>
<dbReference type="Pfam" id="PF02574">
    <property type="entry name" value="S-methyl_trans"/>
    <property type="match status" value="1"/>
</dbReference>
<dbReference type="PIRSF" id="PIRSF000381">
    <property type="entry name" value="MetH"/>
    <property type="match status" value="1"/>
</dbReference>
<dbReference type="SMART" id="SM01018">
    <property type="entry name" value="B12-binding_2"/>
    <property type="match status" value="1"/>
</dbReference>
<dbReference type="SUPFAM" id="SSF52242">
    <property type="entry name" value="Cobalamin (vitamin B12)-binding domain"/>
    <property type="match status" value="1"/>
</dbReference>
<dbReference type="SUPFAM" id="SSF51717">
    <property type="entry name" value="Dihydropteroate synthetase-like"/>
    <property type="match status" value="1"/>
</dbReference>
<dbReference type="SUPFAM" id="SSF82282">
    <property type="entry name" value="Homocysteine S-methyltransferase"/>
    <property type="match status" value="1"/>
</dbReference>
<dbReference type="SUPFAM" id="SSF56507">
    <property type="entry name" value="Methionine synthase activation domain-like"/>
    <property type="match status" value="1"/>
</dbReference>
<dbReference type="SUPFAM" id="SSF47644">
    <property type="entry name" value="Methionine synthase domain"/>
    <property type="match status" value="1"/>
</dbReference>
<dbReference type="PROSITE" id="PS50974">
    <property type="entry name" value="ADOMET_ACTIVATION"/>
    <property type="match status" value="1"/>
</dbReference>
<dbReference type="PROSITE" id="PS51332">
    <property type="entry name" value="B12_BINDING"/>
    <property type="match status" value="1"/>
</dbReference>
<dbReference type="PROSITE" id="PS51337">
    <property type="entry name" value="B12_BINDING_NTER"/>
    <property type="match status" value="1"/>
</dbReference>
<dbReference type="PROSITE" id="PS50970">
    <property type="entry name" value="HCY"/>
    <property type="match status" value="1"/>
</dbReference>
<dbReference type="PROSITE" id="PS50972">
    <property type="entry name" value="PTERIN_BINDING"/>
    <property type="match status" value="1"/>
</dbReference>
<gene>
    <name type="primary">metr-1</name>
    <name type="ORF">CBG20636</name>
</gene>
<comment type="function">
    <text evidence="1">Catalyzes the transfer of a methyl group from methyl-cobalamin to homocysteine, yielding enzyme-bound cob(I)alamin and methionine. Subsequently, remethylates the cofactor using methyltetrahydrofolate (By similarity).</text>
</comment>
<comment type="catalytic activity">
    <reaction>
        <text>(6S)-5-methyl-5,6,7,8-tetrahydrofolate + L-homocysteine = (6S)-5,6,7,8-tetrahydrofolate + L-methionine</text>
        <dbReference type="Rhea" id="RHEA:11172"/>
        <dbReference type="ChEBI" id="CHEBI:18608"/>
        <dbReference type="ChEBI" id="CHEBI:57453"/>
        <dbReference type="ChEBI" id="CHEBI:57844"/>
        <dbReference type="ChEBI" id="CHEBI:58199"/>
        <dbReference type="EC" id="2.1.1.13"/>
    </reaction>
</comment>
<comment type="cofactor">
    <cofactor evidence="1">
        <name>methylcob(III)alamin</name>
        <dbReference type="ChEBI" id="CHEBI:28115"/>
    </cofactor>
</comment>
<comment type="cofactor">
    <cofactor evidence="1">
        <name>Zn(2+)</name>
        <dbReference type="ChEBI" id="CHEBI:29105"/>
    </cofactor>
    <text evidence="1">Binds 1 zinc ion per subunit.</text>
</comment>
<comment type="pathway">
    <text>Amino-acid biosynthesis; L-methionine biosynthesis via de novo pathway; L-methionine from L-homocysteine (MetH route): step 1/1.</text>
</comment>
<comment type="domain">
    <text evidence="1">Modular enzyme with four functionally distinct domains. The isolated Hcy-binding domain catalyzes methyl transfer from free methylcobalamin to homocysteine. The Hcy-binding domain in association with the pterin-binding domain catalyzes the methylation of cob(I)alamin by methyltetrahydrofolate and the methylation of homocysteine. The B12-binding domain binds the cofactor. The AdoMet activation domain binds S-adenosyl-L-methionine. Under aerobic conditions cob(I)alamin can be converted to inactive cob(II)alamin. Reductive methylation by S-adenosyl-L-methionine and flavodoxin regenerates methylcobalamin (By similarity).</text>
</comment>
<comment type="miscellaneous">
    <text evidence="1">L-homocysteine is bound via the zinc atom.</text>
</comment>
<comment type="similarity">
    <text evidence="8">Belongs to the vitamin-B12 dependent methionine synthase family.</text>
</comment>
<protein>
    <recommendedName>
        <fullName>Probable methionine synthase</fullName>
        <ecNumber>2.1.1.13</ecNumber>
    </recommendedName>
    <alternativeName>
        <fullName>5-methyltetrahydrofolate--homocysteine methyltransferase</fullName>
    </alternativeName>
    <alternativeName>
        <fullName>Vitamin-B12 dependent methionine synthase</fullName>
        <shortName>MS</shortName>
    </alternativeName>
</protein>
<proteinExistence type="inferred from homology"/>
<evidence type="ECO:0000250" key="1"/>
<evidence type="ECO:0000250" key="2">
    <source>
        <dbReference type="UniProtKB" id="P13009"/>
    </source>
</evidence>
<evidence type="ECO:0000255" key="3">
    <source>
        <dbReference type="PROSITE-ProRule" id="PRU00333"/>
    </source>
</evidence>
<evidence type="ECO:0000255" key="4">
    <source>
        <dbReference type="PROSITE-ProRule" id="PRU00334"/>
    </source>
</evidence>
<evidence type="ECO:0000255" key="5">
    <source>
        <dbReference type="PROSITE-ProRule" id="PRU00346"/>
    </source>
</evidence>
<evidence type="ECO:0000255" key="6">
    <source>
        <dbReference type="PROSITE-ProRule" id="PRU00666"/>
    </source>
</evidence>
<evidence type="ECO:0000255" key="7">
    <source>
        <dbReference type="PROSITE-ProRule" id="PRU00667"/>
    </source>
</evidence>
<evidence type="ECO:0000305" key="8"/>
<reference key="1">
    <citation type="journal article" date="2003" name="PLoS Biol.">
        <title>The genome sequence of Caenorhabditis briggsae: a platform for comparative genomics.</title>
        <authorList>
            <person name="Stein L.D."/>
            <person name="Bao Z."/>
            <person name="Blasiar D."/>
            <person name="Blumenthal T."/>
            <person name="Brent M.R."/>
            <person name="Chen N."/>
            <person name="Chinwalla A."/>
            <person name="Clarke L."/>
            <person name="Clee C."/>
            <person name="Coghlan A."/>
            <person name="Coulson A."/>
            <person name="D'Eustachio P."/>
            <person name="Fitch D.H.A."/>
            <person name="Fulton L.A."/>
            <person name="Fulton R.E."/>
            <person name="Griffiths-Jones S."/>
            <person name="Harris T.W."/>
            <person name="Hillier L.W."/>
            <person name="Kamath R."/>
            <person name="Kuwabara P.E."/>
            <person name="Mardis E.R."/>
            <person name="Marra M.A."/>
            <person name="Miner T.L."/>
            <person name="Minx P."/>
            <person name="Mullikin J.C."/>
            <person name="Plumb R.W."/>
            <person name="Rogers J."/>
            <person name="Schein J.E."/>
            <person name="Sohrmann M."/>
            <person name="Spieth J."/>
            <person name="Stajich J.E."/>
            <person name="Wei C."/>
            <person name="Willey D."/>
            <person name="Wilson R.K."/>
            <person name="Durbin R.M."/>
            <person name="Waterston R.H."/>
        </authorList>
    </citation>
    <scope>NUCLEOTIDE SEQUENCE [LARGE SCALE GENOMIC DNA]</scope>
    <source>
        <strain>AF16</strain>
    </source>
</reference>
<sequence length="1273" mass="141762">MTRSSLFKELADIAKERIMIIDGAMGTMIQREYMEEHDFRGEILKDHDKPLKGNNDLLSITRPDIIYKIHKLYLEAGADFIETNTFSGTTIAQADYHCEHLVHEINYQSALVARRACDDVGAATGIRRYVCGAIGPTNRTLSISPSVEKPDFRNVTFQELVKAYGDQARSLIQGGVDVLLVETVFDSANAKAALFAIRTLFEDEGVPEIPVFLSGTIVDMSGRTLSGQTGEAFLVSTKQGKPIAVGLNCALGAKDMRQFVQNMSLWSDTLILCYPNAGLPNALGGYDETPEEMAEVLREFAQDGLVNIIGGCCGTTPDHINAMYKAVQGISPRVPPADPHAGKMLLSGLEPSIVGPETNFVNIGERCNVAGSRRFCNLIKNENYDTAIDVARVQVDSGAQILDVNMDDGLLDGPYAMSKFLRLISSEPDVAKIPVCIDSSDFDVIIAGLESTQGKCVVNSISLKEGEEKFKERARIVKRYGAAVVVMAFDEEGQAAETERKFEICERSYRILTEEVGFNPNDIIFDANILTIATGMDEHANYGMYFIEATRMIRENLPGAHVSGGVSNISFSFRGMEAIREAMHSVFLFYAIKAGMDMGIVNAGALPVYEDIDKPLLQLLEDLLFNRDPEATEKLLVAAQEMKKDGKKADTKTDEWRNTSVEERLKFALVKGIDQFVVADTEEARQNTEKYPRPLNVIERPLMDGMAVVGELFGAGKMFLPQVIKSARVMKKAVAHLLPFMDAERQANIEKMGLDEDESPYQGTVVIATVKGDVHDIGKNIVAVVLGCNNFKVVDLGVMTPCENIIKAAIEEKADFIGLSGLITPSLDEMVHVAKEMNRVGLKIPLLIGGATTSKTHTAVKIAPRYPHPVVHCLDASKSVVVCSSLSDMTVRDAFLQDLNEDYEDVRTKMCLVSYLNHFFITEHYESLKDRRFVALGKTREKKFNIDWNKFSPVKPSFIGRREFQNFDFKELIPYIDWKPFFDVWQLRGKYPNRSYPKIFDDADVGGEAKRVFDDAQTWLKKLIDEKVLTANAVVSFLPAASEGDDIHVYDPETGNKLDTFYGLRQQSGREHDQSHFCLSDFIRPLKIGVPDDYLGLFACTAGLGAEEYCKVLEENHDDYASIMVKALADRLAEAYAEYLHKEVRVNLWGYSTNEQLTETDLLSIKYEGIRPACGYPSQPDHTEKRTLWKLLEAEKNGIVLTEHLAMLPAASVSGLYFANPQSQYFAVGKIDEDQVAFIYVRSKNVTDYAARKNVPKEEVERWLSPIIGYELD</sequence>
<feature type="chain" id="PRO_0000412913" description="Probable methionine synthase">
    <location>
        <begin position="1"/>
        <end position="1273"/>
    </location>
</feature>
<feature type="domain" description="Hcy-binding" evidence="3">
    <location>
        <begin position="7"/>
        <end position="327"/>
    </location>
</feature>
<feature type="domain" description="Pterin-binding" evidence="4">
    <location>
        <begin position="360"/>
        <end position="621"/>
    </location>
</feature>
<feature type="domain" description="B12-binding N-terminal" evidence="7">
    <location>
        <begin position="652"/>
        <end position="749"/>
    </location>
</feature>
<feature type="domain" description="B12-binding" evidence="6">
    <location>
        <begin position="762"/>
        <end position="897"/>
    </location>
</feature>
<feature type="domain" description="AdoMet activation" evidence="5">
    <location>
        <begin position="927"/>
        <end position="1273"/>
    </location>
</feature>
<feature type="binding site" evidence="3">
    <location>
        <position position="249"/>
    </location>
    <ligand>
        <name>Zn(2+)</name>
        <dbReference type="ChEBI" id="CHEBI:29105"/>
    </ligand>
</feature>
<feature type="binding site" evidence="3">
    <location>
        <position position="312"/>
    </location>
    <ligand>
        <name>Zn(2+)</name>
        <dbReference type="ChEBI" id="CHEBI:29105"/>
    </ligand>
</feature>
<feature type="binding site" evidence="3">
    <location>
        <position position="313"/>
    </location>
    <ligand>
        <name>Zn(2+)</name>
        <dbReference type="ChEBI" id="CHEBI:29105"/>
    </ligand>
</feature>
<feature type="binding site" evidence="2">
    <location>
        <position position="699"/>
    </location>
    <ligand>
        <name>methylcob(III)alamin</name>
        <dbReference type="ChEBI" id="CHEBI:28115"/>
    </ligand>
</feature>
<feature type="binding site" evidence="2">
    <location>
        <begin position="772"/>
        <end position="776"/>
    </location>
    <ligand>
        <name>methylcob(III)alamin</name>
        <dbReference type="ChEBI" id="CHEBI:28115"/>
    </ligand>
</feature>
<feature type="binding site" description="axial binding residue" evidence="2">
    <location>
        <position position="775"/>
    </location>
    <ligand>
        <name>methylcob(III)alamin</name>
        <dbReference type="ChEBI" id="CHEBI:28115"/>
    </ligand>
    <ligandPart>
        <name>Co</name>
        <dbReference type="ChEBI" id="CHEBI:27638"/>
    </ligandPart>
</feature>
<feature type="binding site" evidence="2">
    <location>
        <position position="820"/>
    </location>
    <ligand>
        <name>methylcob(III)alamin</name>
        <dbReference type="ChEBI" id="CHEBI:28115"/>
    </ligand>
</feature>
<feature type="binding site" evidence="2">
    <location>
        <position position="824"/>
    </location>
    <ligand>
        <name>methylcob(III)alamin</name>
        <dbReference type="ChEBI" id="CHEBI:28115"/>
    </ligand>
</feature>
<feature type="binding site" evidence="2">
    <location>
        <position position="876"/>
    </location>
    <ligand>
        <name>methylcob(III)alamin</name>
        <dbReference type="ChEBI" id="CHEBI:28115"/>
    </ligand>
</feature>
<feature type="binding site" evidence="1">
    <location>
        <position position="977"/>
    </location>
    <ligand>
        <name>S-adenosyl-L-methionine</name>
        <dbReference type="ChEBI" id="CHEBI:59789"/>
    </ligand>
</feature>
<feature type="binding site" evidence="1">
    <location>
        <position position="1171"/>
    </location>
    <ligand>
        <name>S-adenosyl-L-methionine</name>
        <dbReference type="ChEBI" id="CHEBI:59789"/>
    </ligand>
</feature>
<feature type="binding site" evidence="1">
    <location>
        <begin position="1225"/>
        <end position="1226"/>
    </location>
    <ligand>
        <name>S-adenosyl-L-methionine</name>
        <dbReference type="ChEBI" id="CHEBI:59789"/>
    </ligand>
</feature>
<organism>
    <name type="scientific">Caenorhabditis briggsae</name>
    <dbReference type="NCBI Taxonomy" id="6238"/>
    <lineage>
        <taxon>Eukaryota</taxon>
        <taxon>Metazoa</taxon>
        <taxon>Ecdysozoa</taxon>
        <taxon>Nematoda</taxon>
        <taxon>Chromadorea</taxon>
        <taxon>Rhabditida</taxon>
        <taxon>Rhabditina</taxon>
        <taxon>Rhabditomorpha</taxon>
        <taxon>Rhabditoidea</taxon>
        <taxon>Rhabditidae</taxon>
        <taxon>Peloderinae</taxon>
        <taxon>Caenorhabditis</taxon>
    </lineage>
</organism>
<name>METH_CAEBR</name>